<sequence length="85" mass="9130">XSSLPAASVSLPADSEGGEEEDLQCVCLKTTSGIHPRHISSLEVIGAGLHCPSPQLIATLKTGRKICLDQQNPLYKKIIKRLLKN</sequence>
<proteinExistence type="evidence at protein level"/>
<evidence type="ECO:0000250" key="1"/>
<evidence type="ECO:0000250" key="2">
    <source>
        <dbReference type="UniProtKB" id="P02776"/>
    </source>
</evidence>
<evidence type="ECO:0000250" key="3">
    <source>
        <dbReference type="UniProtKB" id="P06765"/>
    </source>
</evidence>
<evidence type="ECO:0000305" key="4"/>
<reference key="1">
    <citation type="journal article" date="1991" name="Thromb. Res.">
        <title>Ovine platelet factor 4: purification, amino acid sequence, radioimmunoassay and comparison with platelet factor 4 of other species.</title>
        <authorList>
            <person name="Shigeta O."/>
            <person name="Lu W."/>
            <person name="Holt J.C."/>
            <person name="Edmunds L.H. Jr."/>
            <person name="Niewiarowski S."/>
        </authorList>
    </citation>
    <scope>PROTEIN SEQUENCE</scope>
</reference>
<feature type="chain" id="PRO_0000144301" description="Platelet factor 4">
    <location>
        <begin position="1"/>
        <end position="85"/>
    </location>
</feature>
<feature type="binding site" evidence="1">
    <location>
        <begin position="76"/>
        <end position="82"/>
    </location>
    <ligand>
        <name>heparin</name>
        <dbReference type="ChEBI" id="CHEBI:28304"/>
    </ligand>
</feature>
<feature type="modified residue" description="Phosphoserine" evidence="3">
    <location>
        <position position="41"/>
    </location>
</feature>
<feature type="disulfide bond" evidence="1">
    <location>
        <begin position="25"/>
        <end position="51"/>
    </location>
</feature>
<feature type="disulfide bond" evidence="1">
    <location>
        <begin position="27"/>
        <end position="67"/>
    </location>
</feature>
<comment type="function">
    <text evidence="2">Chemokine released during platelet aggregation that plays a role in different biological processes including hematopoiesis, cell proliferation, differentiation, and activation. Acts via different functional receptors including CCR1, CXCR3A or CXCR3B. Upon interaction with CXCR3A receptor, induces activated T-lymphocytes migration mediated via downstream Ras/extracellular signal-regulated kinase (ERK) signaling. Neutralizes the anticoagulant effect of heparin by binding more strongly to heparin than to the chondroitin-4-sulfate chains of the carrier molecule. Plays a role in the inhibition of hematopoiesis and in the maintenance of hematopoietic stem cell (HSC) quiescence. Chemotactic for neutrophils and monocytes via CCR1. Inhibits endothelial cell proliferation. In cooperation with toll-like receptor 8/TLR8, induces chromatin remodeling and activates inflammatory gene expression via the TBK1-IRF5 axis. In addition, induces myofibroblast differentiation and collagen synthesis in different precursor cells, including endothelial cells, by stimulating endothelial-to-mesenchymal transition. Interacts with thrombomodulin/THBD to enhance the activation of protein C and thus potentiates its anticoagulant activity.</text>
</comment>
<comment type="subunit">
    <text evidence="2">Homotetramer. Interacts with TNFAIP6 (via Link domain). Interacts with CCR1. Interacts with CXCR3. Interacts with THBD; this interaction enhances generation of activated protein C.</text>
</comment>
<comment type="subcellular location">
    <subcellularLocation>
        <location>Secreted</location>
    </subcellularLocation>
</comment>
<comment type="similarity">
    <text evidence="4">Belongs to the intercrine alpha (chemokine CxC) family.</text>
</comment>
<dbReference type="STRING" id="9940.ENSOARP00000015836"/>
<dbReference type="PaxDb" id="9940-ENSOARP00000015836"/>
<dbReference type="eggNOG" id="ENOG502TF57">
    <property type="taxonomic scope" value="Eukaryota"/>
</dbReference>
<dbReference type="Proteomes" id="UP000002356">
    <property type="component" value="Unplaced"/>
</dbReference>
<dbReference type="GO" id="GO:0005615">
    <property type="term" value="C:extracellular space"/>
    <property type="evidence" value="ECO:0007669"/>
    <property type="project" value="UniProtKB-KW"/>
</dbReference>
<dbReference type="GO" id="GO:0008009">
    <property type="term" value="F:chemokine activity"/>
    <property type="evidence" value="ECO:0007669"/>
    <property type="project" value="InterPro"/>
</dbReference>
<dbReference type="GO" id="GO:0048248">
    <property type="term" value="F:CXCR3 chemokine receptor binding"/>
    <property type="evidence" value="ECO:0000250"/>
    <property type="project" value="UniProtKB"/>
</dbReference>
<dbReference type="GO" id="GO:0008201">
    <property type="term" value="F:heparin binding"/>
    <property type="evidence" value="ECO:0000250"/>
    <property type="project" value="UniProtKB"/>
</dbReference>
<dbReference type="GO" id="GO:0007189">
    <property type="term" value="P:adenylate cyclase-activating G protein-coupled receptor signaling pathway"/>
    <property type="evidence" value="ECO:0000250"/>
    <property type="project" value="UniProtKB"/>
</dbReference>
<dbReference type="GO" id="GO:0019221">
    <property type="term" value="P:cytokine-mediated signaling pathway"/>
    <property type="evidence" value="ECO:0000250"/>
    <property type="project" value="UniProtKB"/>
</dbReference>
<dbReference type="GO" id="GO:0006952">
    <property type="term" value="P:defense response"/>
    <property type="evidence" value="ECO:0007669"/>
    <property type="project" value="InterPro"/>
</dbReference>
<dbReference type="GO" id="GO:0006955">
    <property type="term" value="P:immune response"/>
    <property type="evidence" value="ECO:0007669"/>
    <property type="project" value="InterPro"/>
</dbReference>
<dbReference type="GO" id="GO:0030595">
    <property type="term" value="P:leukocyte chemotaxis"/>
    <property type="evidence" value="ECO:0000250"/>
    <property type="project" value="UniProtKB"/>
</dbReference>
<dbReference type="GO" id="GO:0016525">
    <property type="term" value="P:negative regulation of angiogenesis"/>
    <property type="evidence" value="ECO:0000250"/>
    <property type="project" value="UniProtKB"/>
</dbReference>
<dbReference type="GO" id="GO:0045653">
    <property type="term" value="P:negative regulation of megakaryocyte differentiation"/>
    <property type="evidence" value="ECO:0000250"/>
    <property type="project" value="UniProtKB"/>
</dbReference>
<dbReference type="GO" id="GO:0030168">
    <property type="term" value="P:platelet activation"/>
    <property type="evidence" value="ECO:0000250"/>
    <property type="project" value="UniProtKB"/>
</dbReference>
<dbReference type="GO" id="GO:0045944">
    <property type="term" value="P:positive regulation of transcription by RNA polymerase II"/>
    <property type="evidence" value="ECO:0000250"/>
    <property type="project" value="UniProtKB"/>
</dbReference>
<dbReference type="GO" id="GO:0042127">
    <property type="term" value="P:regulation of cell population proliferation"/>
    <property type="evidence" value="ECO:0000250"/>
    <property type="project" value="UniProtKB"/>
</dbReference>
<dbReference type="CDD" id="cd00273">
    <property type="entry name" value="Chemokine_CXC"/>
    <property type="match status" value="1"/>
</dbReference>
<dbReference type="FunFam" id="2.40.50.40:FF:000004">
    <property type="entry name" value="C-X-C motif chemokine"/>
    <property type="match status" value="1"/>
</dbReference>
<dbReference type="Gene3D" id="2.40.50.40">
    <property type="match status" value="1"/>
</dbReference>
<dbReference type="InterPro" id="IPR039809">
    <property type="entry name" value="Chemokine_b/g/d"/>
</dbReference>
<dbReference type="InterPro" id="IPR001089">
    <property type="entry name" value="Chemokine_CXC"/>
</dbReference>
<dbReference type="InterPro" id="IPR018048">
    <property type="entry name" value="Chemokine_CXC_CS"/>
</dbReference>
<dbReference type="InterPro" id="IPR001811">
    <property type="entry name" value="Chemokine_IL8-like_dom"/>
</dbReference>
<dbReference type="InterPro" id="IPR033899">
    <property type="entry name" value="CXC_Chemokine_domain"/>
</dbReference>
<dbReference type="InterPro" id="IPR036048">
    <property type="entry name" value="Interleukin_8-like_sf"/>
</dbReference>
<dbReference type="PANTHER" id="PTHR12015:SF211">
    <property type="entry name" value="PLATELET FACTOR 4"/>
    <property type="match status" value="1"/>
</dbReference>
<dbReference type="PANTHER" id="PTHR12015">
    <property type="entry name" value="SMALL INDUCIBLE CYTOKINE A"/>
    <property type="match status" value="1"/>
</dbReference>
<dbReference type="Pfam" id="PF00048">
    <property type="entry name" value="IL8"/>
    <property type="match status" value="1"/>
</dbReference>
<dbReference type="PRINTS" id="PR00436">
    <property type="entry name" value="INTERLEUKIN8"/>
</dbReference>
<dbReference type="PRINTS" id="PR00437">
    <property type="entry name" value="SMALLCYTKCXC"/>
</dbReference>
<dbReference type="SMART" id="SM00199">
    <property type="entry name" value="SCY"/>
    <property type="match status" value="1"/>
</dbReference>
<dbReference type="SUPFAM" id="SSF54117">
    <property type="entry name" value="Interleukin 8-like chemokines"/>
    <property type="match status" value="1"/>
</dbReference>
<dbReference type="PROSITE" id="PS00471">
    <property type="entry name" value="SMALL_CYTOKINES_CXC"/>
    <property type="match status" value="1"/>
</dbReference>
<accession>P30035</accession>
<organism>
    <name type="scientific">Ovis aries</name>
    <name type="common">Sheep</name>
    <dbReference type="NCBI Taxonomy" id="9940"/>
    <lineage>
        <taxon>Eukaryota</taxon>
        <taxon>Metazoa</taxon>
        <taxon>Chordata</taxon>
        <taxon>Craniata</taxon>
        <taxon>Vertebrata</taxon>
        <taxon>Euteleostomi</taxon>
        <taxon>Mammalia</taxon>
        <taxon>Eutheria</taxon>
        <taxon>Laurasiatheria</taxon>
        <taxon>Artiodactyla</taxon>
        <taxon>Ruminantia</taxon>
        <taxon>Pecora</taxon>
        <taxon>Bovidae</taxon>
        <taxon>Caprinae</taxon>
        <taxon>Ovis</taxon>
    </lineage>
</organism>
<gene>
    <name type="primary">PF4</name>
    <name type="synonym">CXCL4</name>
    <name type="synonym">SCYB4</name>
</gene>
<keyword id="KW-0145">Chemotaxis</keyword>
<keyword id="KW-0202">Cytokine</keyword>
<keyword id="KW-0903">Direct protein sequencing</keyword>
<keyword id="KW-1015">Disulfide bond</keyword>
<keyword id="KW-0358">Heparin-binding</keyword>
<keyword id="KW-0597">Phosphoprotein</keyword>
<keyword id="KW-1185">Reference proteome</keyword>
<keyword id="KW-0964">Secreted</keyword>
<name>PLF4_SHEEP</name>
<protein>
    <recommendedName>
        <fullName>Platelet factor 4</fullName>
        <shortName>PF-4</shortName>
    </recommendedName>
    <alternativeName>
        <fullName>C-X-C motif chemokine 4</fullName>
    </alternativeName>
</protein>